<reference key="1">
    <citation type="journal article" date="1987" name="DNA">
        <title>Bovine and human cDNA sequences encoding a putative benzodiazepine receptor ligand.</title>
        <authorList>
            <person name="Webb N.R."/>
            <person name="Rose T.M."/>
            <person name="Malik N."/>
            <person name="Marquardt H."/>
            <person name="Shoyab M."/>
            <person name="Todaro G.J."/>
            <person name="Lee D.C."/>
        </authorList>
    </citation>
    <scope>NUCLEOTIDE SEQUENCE [MRNA] (ISOFORM 1)</scope>
    <source>
        <tissue>Brain</tissue>
    </source>
</reference>
<reference key="2">
    <citation type="journal article" date="1991" name="Neuropharmacology">
        <title>Human DBI (endozepine): relationship to a homologous membrane associated protein (MA-DBI).</title>
        <authorList>
            <person name="Todaro G.J."/>
            <person name="Rose T.M."/>
            <person name="Shoyab M."/>
        </authorList>
    </citation>
    <scope>NUCLEOTIDE SEQUENCE [MRNA] (ISOFORM 1)</scope>
    <scope>TISSUE SPECIFICITY</scope>
    <source>
        <tissue>Brain</tissue>
    </source>
</reference>
<reference key="3">
    <citation type="submission" date="2005-08" db="EMBL/GenBank/DDBJ databases">
        <authorList>
            <consortium name="NIH - Mammalian Gene Collection (MGC) project"/>
        </authorList>
    </citation>
    <scope>NUCLEOTIDE SEQUENCE [LARGE SCALE MRNA] OF 1-220 (ISOFORM 2)</scope>
    <source>
        <strain>Crossbred X Angus</strain>
        <tissue>Ileum</tissue>
    </source>
</reference>
<feature type="chain" id="PRO_0000000290" description="Acyl-CoA-binding domain-containing protein 5">
    <location>
        <begin position="1"/>
        <end position="533"/>
    </location>
</feature>
<feature type="transmembrane region" description="Helical" evidence="4">
    <location>
        <begin position="503"/>
        <end position="525"/>
    </location>
</feature>
<feature type="domain" description="ACB" evidence="5">
    <location>
        <begin position="42"/>
        <end position="131"/>
    </location>
</feature>
<feature type="region of interest" description="Disordered" evidence="6">
    <location>
        <begin position="182"/>
        <end position="227"/>
    </location>
</feature>
<feature type="region of interest" description="Disordered" evidence="6">
    <location>
        <begin position="339"/>
        <end position="443"/>
    </location>
</feature>
<feature type="coiled-coil region" evidence="4">
    <location>
        <begin position="448"/>
        <end position="478"/>
    </location>
</feature>
<feature type="compositionally biased region" description="Basic and acidic residues" evidence="6">
    <location>
        <begin position="208"/>
        <end position="227"/>
    </location>
</feature>
<feature type="compositionally biased region" description="Basic and acidic residues" evidence="6">
    <location>
        <begin position="374"/>
        <end position="383"/>
    </location>
</feature>
<feature type="compositionally biased region" description="Basic and acidic residues" evidence="6">
    <location>
        <begin position="432"/>
        <end position="442"/>
    </location>
</feature>
<feature type="binding site" evidence="1">
    <location>
        <begin position="53"/>
        <end position="62"/>
    </location>
    <ligand>
        <name>an acyl-CoA</name>
        <dbReference type="ChEBI" id="CHEBI:58342"/>
    </ligand>
</feature>
<feature type="binding site" evidence="1">
    <location>
        <begin position="73"/>
        <end position="77"/>
    </location>
    <ligand>
        <name>an acyl-CoA</name>
        <dbReference type="ChEBI" id="CHEBI:58342"/>
    </ligand>
</feature>
<feature type="binding site" evidence="1">
    <location>
        <position position="99"/>
    </location>
    <ligand>
        <name>an acyl-CoA</name>
        <dbReference type="ChEBI" id="CHEBI:58342"/>
    </ligand>
</feature>
<feature type="binding site" evidence="1">
    <location>
        <position position="118"/>
    </location>
    <ligand>
        <name>an acyl-CoA</name>
        <dbReference type="ChEBI" id="CHEBI:58342"/>
    </ligand>
</feature>
<feature type="modified residue" description="Phosphoserine" evidence="2">
    <location>
        <position position="194"/>
    </location>
</feature>
<feature type="modified residue" description="Phosphoserine" evidence="2">
    <location>
        <position position="195"/>
    </location>
</feature>
<feature type="modified residue" description="Phosphoserine" evidence="2">
    <location>
        <position position="197"/>
    </location>
</feature>
<feature type="modified residue" description="Phosphoserine" evidence="2">
    <location>
        <position position="201"/>
    </location>
</feature>
<feature type="modified residue" description="Phosphoserine" evidence="3">
    <location>
        <position position="244"/>
    </location>
</feature>
<feature type="modified residue" description="Phosphoserine" evidence="2">
    <location>
        <position position="314"/>
    </location>
</feature>
<feature type="modified residue" description="Phosphoserine" evidence="2">
    <location>
        <position position="429"/>
    </location>
</feature>
<feature type="modified residue" description="N6-acetyllysine" evidence="3">
    <location>
        <position position="470"/>
    </location>
</feature>
<feature type="splice variant" id="VSP_025445" description="In isoform 2." evidence="8">
    <location>
        <begin position="163"/>
        <end position="173"/>
    </location>
</feature>
<feature type="sequence conflict" description="In Ref. 1; AAA30496 and 2; AAB21311." evidence="9" ref="1 2">
    <original>AD</original>
    <variation>RH</variation>
    <location>
        <begin position="36"/>
        <end position="37"/>
    </location>
</feature>
<feature type="sequence conflict" description="In Ref. 2; AAI02374." evidence="9" ref="2">
    <original>D</original>
    <variation>E</variation>
    <location>
        <position position="219"/>
    </location>
</feature>
<accession>P07106</accession>
<accession>Q3T0I9</accession>
<evidence type="ECO:0000250" key="1"/>
<evidence type="ECO:0000250" key="2">
    <source>
        <dbReference type="UniProtKB" id="Q5T8D3"/>
    </source>
</evidence>
<evidence type="ECO:0000250" key="3">
    <source>
        <dbReference type="UniProtKB" id="Q5XG73"/>
    </source>
</evidence>
<evidence type="ECO:0000255" key="4"/>
<evidence type="ECO:0000255" key="5">
    <source>
        <dbReference type="PROSITE-ProRule" id="PRU00573"/>
    </source>
</evidence>
<evidence type="ECO:0000256" key="6">
    <source>
        <dbReference type="SAM" id="MobiDB-lite"/>
    </source>
</evidence>
<evidence type="ECO:0000269" key="7">
    <source>
    </source>
</evidence>
<evidence type="ECO:0000303" key="8">
    <source ref="3"/>
</evidence>
<evidence type="ECO:0000305" key="9"/>
<gene>
    <name type="primary">ACBD5</name>
    <name type="synonym">DBI</name>
</gene>
<keyword id="KW-0007">Acetylation</keyword>
<keyword id="KW-0025">Alternative splicing</keyword>
<keyword id="KW-0072">Autophagy</keyword>
<keyword id="KW-0175">Coiled coil</keyword>
<keyword id="KW-0446">Lipid-binding</keyword>
<keyword id="KW-0472">Membrane</keyword>
<keyword id="KW-0576">Peroxisome</keyword>
<keyword id="KW-0597">Phosphoprotein</keyword>
<keyword id="KW-1185">Reference proteome</keyword>
<keyword id="KW-0812">Transmembrane</keyword>
<keyword id="KW-1133">Transmembrane helix</keyword>
<keyword id="KW-0813">Transport</keyword>
<organism>
    <name type="scientific">Bos taurus</name>
    <name type="common">Bovine</name>
    <dbReference type="NCBI Taxonomy" id="9913"/>
    <lineage>
        <taxon>Eukaryota</taxon>
        <taxon>Metazoa</taxon>
        <taxon>Chordata</taxon>
        <taxon>Craniata</taxon>
        <taxon>Vertebrata</taxon>
        <taxon>Euteleostomi</taxon>
        <taxon>Mammalia</taxon>
        <taxon>Eutheria</taxon>
        <taxon>Laurasiatheria</taxon>
        <taxon>Artiodactyla</taxon>
        <taxon>Ruminantia</taxon>
        <taxon>Pecora</taxon>
        <taxon>Bovidae</taxon>
        <taxon>Bovinae</taxon>
        <taxon>Bos</taxon>
    </lineage>
</organism>
<name>ACBD5_BOVIN</name>
<proteinExistence type="evidence at transcript level"/>
<comment type="function">
    <text evidence="1">Acyl-CoA binding protein which acts as the peroxisome receptor for pexophagy but is dispensable for aggrephagy and nonselective autophagy. Binds medium- and long-chain acyl-CoA esters (By similarity).</text>
</comment>
<comment type="subcellular location">
    <subcellularLocation>
        <location evidence="1">Peroxisome membrane</location>
        <topology evidence="1">Single-pass membrane protein</topology>
    </subcellularLocation>
</comment>
<comment type="alternative products">
    <event type="alternative splicing"/>
    <isoform>
        <id>P07106-1</id>
        <name>1</name>
        <sequence type="displayed"/>
    </isoform>
    <isoform>
        <id>P07106-2</id>
        <name>2</name>
        <sequence type="described" ref="VSP_025445"/>
    </isoform>
</comment>
<comment type="tissue specificity">
    <text evidence="7">Highly expressed in brain and liver. Lower levels of expression in spleen and heart.</text>
</comment>
<comment type="similarity">
    <text evidence="9">Belongs to the ATG37 family.</text>
</comment>
<sequence length="533" mass="59653">MFQFHAGSWESWCCCCCLIPGDRPWDRGRRWRLEMADTRSVHETRFEAAVKVIQSLPKNGSFQPTNEMMLKFYSFYKQATEGPCKLSKPGFWDPVGRYKWDAWSSLGDMTKEEAMIAYVEEMKKILETMPMTEKVEELLHVIGPFYEIVEDKKSGRSSDLTSVRLEKISKCLEDLGNVLASTPNAKTVNGKAESSDSGAESEEEAAQEDPKRPEPRDSDKKMMKKSADHKNLEIIVTNGYDKDSFVQGVQNSIHTSPSLNGRCTEEVKSVDENLEQTGKTVVFVHQDVNSDHVEDISGIQHLTSDSDSEVYCDSMEQFGQEESLDGFISNNGPFSYYLGGNPSQPLESSGFPEAVQGLPGNGSPEDMQGAVVEGKGEVKRGGEDGGSNSGAPHREKRAGESEEFSNIRRGRGHRMQHLSEGSKGRQVGSGGDGERWGSDRGSRGSLNEQIALVLMRLQEDMQNVLQRLHKLEMLAASQAKSSALQTSNQPTSPRPSWWPFEMSPGALTFAIIWPFIAQWLVHLYYQRRRRKLN</sequence>
<dbReference type="EMBL" id="M15888">
    <property type="protein sequence ID" value="AAA30496.1"/>
    <property type="molecule type" value="mRNA"/>
</dbReference>
<dbReference type="EMBL" id="S80107">
    <property type="protein sequence ID" value="AAB21311.2"/>
    <property type="molecule type" value="mRNA"/>
</dbReference>
<dbReference type="EMBL" id="BC102373">
    <property type="protein sequence ID" value="AAI02374.1"/>
    <property type="status" value="ALT_TERM"/>
    <property type="molecule type" value="mRNA"/>
</dbReference>
<dbReference type="PIR" id="C26448">
    <property type="entry name" value="NZBOR"/>
</dbReference>
<dbReference type="RefSeq" id="NP_851381.1">
    <property type="nucleotide sequence ID" value="NM_181038.3"/>
</dbReference>
<dbReference type="SMR" id="P07106"/>
<dbReference type="FunCoup" id="P07106">
    <property type="interactions" value="1035"/>
</dbReference>
<dbReference type="STRING" id="9913.ENSBTAP00000022964"/>
<dbReference type="PaxDb" id="9913-ENSBTAP00000022964"/>
<dbReference type="PeptideAtlas" id="P07106"/>
<dbReference type="GeneID" id="353160"/>
<dbReference type="KEGG" id="bta:353160"/>
<dbReference type="CTD" id="91452"/>
<dbReference type="eggNOG" id="KOG0817">
    <property type="taxonomic scope" value="Eukaryota"/>
</dbReference>
<dbReference type="InParanoid" id="P07106"/>
<dbReference type="OrthoDB" id="71307at2759"/>
<dbReference type="Proteomes" id="UP000009136">
    <property type="component" value="Unplaced"/>
</dbReference>
<dbReference type="GO" id="GO:0005737">
    <property type="term" value="C:cytoplasm"/>
    <property type="evidence" value="ECO:0000318"/>
    <property type="project" value="GO_Central"/>
</dbReference>
<dbReference type="GO" id="GO:0005778">
    <property type="term" value="C:peroxisomal membrane"/>
    <property type="evidence" value="ECO:0007669"/>
    <property type="project" value="UniProtKB-SubCell"/>
</dbReference>
<dbReference type="GO" id="GO:0005777">
    <property type="term" value="C:peroxisome"/>
    <property type="evidence" value="ECO:0000318"/>
    <property type="project" value="GO_Central"/>
</dbReference>
<dbReference type="GO" id="GO:0000062">
    <property type="term" value="F:fatty-acyl-CoA binding"/>
    <property type="evidence" value="ECO:0000318"/>
    <property type="project" value="GO_Central"/>
</dbReference>
<dbReference type="GO" id="GO:0006631">
    <property type="term" value="P:fatty acid metabolic process"/>
    <property type="evidence" value="ECO:0000318"/>
    <property type="project" value="GO_Central"/>
</dbReference>
<dbReference type="GO" id="GO:0000425">
    <property type="term" value="P:pexophagy"/>
    <property type="evidence" value="ECO:0007669"/>
    <property type="project" value="InterPro"/>
</dbReference>
<dbReference type="CDD" id="cd00435">
    <property type="entry name" value="ACBP"/>
    <property type="match status" value="1"/>
</dbReference>
<dbReference type="FunFam" id="1.20.80.10:FF:000010">
    <property type="entry name" value="Acyl-CoA-binding domain-containing protein 5"/>
    <property type="match status" value="1"/>
</dbReference>
<dbReference type="Gene3D" id="1.20.80.10">
    <property type="match status" value="1"/>
</dbReference>
<dbReference type="InterPro" id="IPR016347">
    <property type="entry name" value="ACBD5"/>
</dbReference>
<dbReference type="InterPro" id="IPR022408">
    <property type="entry name" value="Acyl-CoA-binding_prot_CS"/>
</dbReference>
<dbReference type="InterPro" id="IPR000582">
    <property type="entry name" value="Acyl-CoA-binding_protein"/>
</dbReference>
<dbReference type="InterPro" id="IPR035984">
    <property type="entry name" value="Acyl-CoA-binding_sf"/>
</dbReference>
<dbReference type="InterPro" id="IPR014352">
    <property type="entry name" value="FERM/acyl-CoA-bd_prot_sf"/>
</dbReference>
<dbReference type="PANTHER" id="PTHR23310:SF6">
    <property type="entry name" value="ACYL-COA-BINDING DOMAIN-CONTAINING PROTEIN 5"/>
    <property type="match status" value="1"/>
</dbReference>
<dbReference type="PANTHER" id="PTHR23310">
    <property type="entry name" value="ACYL-COA-BINDING PROTEIN, ACBP"/>
    <property type="match status" value="1"/>
</dbReference>
<dbReference type="Pfam" id="PF00887">
    <property type="entry name" value="ACBP"/>
    <property type="match status" value="1"/>
</dbReference>
<dbReference type="PIRSF" id="PIRSF002412">
    <property type="entry name" value="MA_DBI"/>
    <property type="match status" value="1"/>
</dbReference>
<dbReference type="PRINTS" id="PR00689">
    <property type="entry name" value="ACOABINDINGP"/>
</dbReference>
<dbReference type="SUPFAM" id="SSF47027">
    <property type="entry name" value="Acyl-CoA binding protein"/>
    <property type="match status" value="1"/>
</dbReference>
<dbReference type="PROSITE" id="PS00880">
    <property type="entry name" value="ACB_1"/>
    <property type="match status" value="1"/>
</dbReference>
<dbReference type="PROSITE" id="PS51228">
    <property type="entry name" value="ACB_2"/>
    <property type="match status" value="1"/>
</dbReference>
<protein>
    <recommendedName>
        <fullName>Acyl-CoA-binding domain-containing protein 5</fullName>
    </recommendedName>
    <alternativeName>
        <fullName>Endozepine-related protein</fullName>
    </alternativeName>
    <alternativeName>
        <fullName>Membrane-associated diazepam-binding inhibitor</fullName>
        <shortName>MA-DBI</shortName>
    </alternativeName>
</protein>